<protein>
    <recommendedName>
        <fullName evidence="1">Deoxyguanosinetriphosphate triphosphohydrolase-like protein</fullName>
    </recommendedName>
</protein>
<feature type="chain" id="PRO_1000138917" description="Deoxyguanosinetriphosphate triphosphohydrolase-like protein">
    <location>
        <begin position="1"/>
        <end position="424"/>
    </location>
</feature>
<feature type="domain" description="HD" evidence="2">
    <location>
        <begin position="67"/>
        <end position="217"/>
    </location>
</feature>
<feature type="region of interest" description="Disordered" evidence="3">
    <location>
        <begin position="1"/>
        <end position="24"/>
    </location>
</feature>
<feature type="compositionally biased region" description="Basic and acidic residues" evidence="3">
    <location>
        <begin position="8"/>
        <end position="18"/>
    </location>
</feature>
<gene>
    <name type="ordered locus">cgR_2144</name>
</gene>
<keyword id="KW-0378">Hydrolase</keyword>
<sequence>MYPYSDADAFRRHPERAKSSQLRTSAVDTRSAFARDRARVLHSAALRRLADKTQVVGPNDGDTPRTRLTHSLEVAQIARGIGAGLDLDPDLCDLAGLCHDIGHPPYGHNGENALNEVAAACGGFEGNAQTLRILTRLEPKIVSDEGASFGLNLSRAALDAACKYPWAKTNADGSVNKKYSAYDEDAEILDWIRQGHEDLRPPIEAQVMDFSDDIAYSVHDVEDGIVSGRIDLKVLWDLVELAALADKGAAAFGGSPAELIEGAASLRELPVVAAAADFDFSLRSYAALKAMTSELVGRYVGSTIESTKKTHAGIDVGRMYGDLIIPETAASEVKLLKTLAVLYVMDDPGHLARQNRQRDRIFRVFDYLVLGAPGSLDPMYRQWFIEANSESEQIRVIVDQIASMTESRLERLARNAADISGFLG</sequence>
<comment type="similarity">
    <text evidence="1">Belongs to the dGTPase family. Type 2 subfamily.</text>
</comment>
<evidence type="ECO:0000255" key="1">
    <source>
        <dbReference type="HAMAP-Rule" id="MF_01212"/>
    </source>
</evidence>
<evidence type="ECO:0000255" key="2">
    <source>
        <dbReference type="PROSITE-ProRule" id="PRU01175"/>
    </source>
</evidence>
<evidence type="ECO:0000256" key="3">
    <source>
        <dbReference type="SAM" id="MobiDB-lite"/>
    </source>
</evidence>
<dbReference type="EMBL" id="AP009044">
    <property type="protein sequence ID" value="BAF55146.1"/>
    <property type="molecule type" value="Genomic_DNA"/>
</dbReference>
<dbReference type="RefSeq" id="WP_011897627.1">
    <property type="nucleotide sequence ID" value="NC_009342.1"/>
</dbReference>
<dbReference type="SMR" id="A4QFY0"/>
<dbReference type="KEGG" id="cgt:cgR_2144"/>
<dbReference type="HOGENOM" id="CLU_028163_0_1_11"/>
<dbReference type="PhylomeDB" id="A4QFY0"/>
<dbReference type="Proteomes" id="UP000006698">
    <property type="component" value="Chromosome"/>
</dbReference>
<dbReference type="GO" id="GO:0008832">
    <property type="term" value="F:dGTPase activity"/>
    <property type="evidence" value="ECO:0007669"/>
    <property type="project" value="TreeGrafter"/>
</dbReference>
<dbReference type="GO" id="GO:0006203">
    <property type="term" value="P:dGTP catabolic process"/>
    <property type="evidence" value="ECO:0007669"/>
    <property type="project" value="TreeGrafter"/>
</dbReference>
<dbReference type="CDD" id="cd00077">
    <property type="entry name" value="HDc"/>
    <property type="match status" value="1"/>
</dbReference>
<dbReference type="Gene3D" id="1.10.3210.10">
    <property type="entry name" value="Hypothetical protein af1432"/>
    <property type="match status" value="1"/>
</dbReference>
<dbReference type="HAMAP" id="MF_01212">
    <property type="entry name" value="dGTPase_type2"/>
    <property type="match status" value="1"/>
</dbReference>
<dbReference type="InterPro" id="IPR006261">
    <property type="entry name" value="dGTPase"/>
</dbReference>
<dbReference type="InterPro" id="IPR050135">
    <property type="entry name" value="dGTPase-like"/>
</dbReference>
<dbReference type="InterPro" id="IPR023023">
    <property type="entry name" value="dNTPase_2"/>
</dbReference>
<dbReference type="InterPro" id="IPR003607">
    <property type="entry name" value="HD/PDEase_dom"/>
</dbReference>
<dbReference type="InterPro" id="IPR006674">
    <property type="entry name" value="HD_domain"/>
</dbReference>
<dbReference type="InterPro" id="IPR026875">
    <property type="entry name" value="PHydrolase_assoc_dom"/>
</dbReference>
<dbReference type="NCBIfam" id="TIGR01353">
    <property type="entry name" value="dGTP_triPase"/>
    <property type="match status" value="1"/>
</dbReference>
<dbReference type="NCBIfam" id="NF002829">
    <property type="entry name" value="PRK03007.1"/>
    <property type="match status" value="1"/>
</dbReference>
<dbReference type="PANTHER" id="PTHR11373:SF32">
    <property type="entry name" value="DEOXYGUANOSINETRIPHOSPHATE TRIPHOSPHOHYDROLASE"/>
    <property type="match status" value="1"/>
</dbReference>
<dbReference type="PANTHER" id="PTHR11373">
    <property type="entry name" value="DEOXYNUCLEOSIDE TRIPHOSPHATE TRIPHOSPHOHYDROLASE"/>
    <property type="match status" value="1"/>
</dbReference>
<dbReference type="Pfam" id="PF01966">
    <property type="entry name" value="HD"/>
    <property type="match status" value="1"/>
</dbReference>
<dbReference type="Pfam" id="PF13286">
    <property type="entry name" value="HD_assoc"/>
    <property type="match status" value="1"/>
</dbReference>
<dbReference type="SMART" id="SM00471">
    <property type="entry name" value="HDc"/>
    <property type="match status" value="1"/>
</dbReference>
<dbReference type="SUPFAM" id="SSF109604">
    <property type="entry name" value="HD-domain/PDEase-like"/>
    <property type="match status" value="1"/>
</dbReference>
<dbReference type="PROSITE" id="PS51831">
    <property type="entry name" value="HD"/>
    <property type="match status" value="1"/>
</dbReference>
<accession>A4QFY0</accession>
<name>DGTL1_CORGB</name>
<reference key="1">
    <citation type="journal article" date="2007" name="Microbiology">
        <title>Comparative analysis of the Corynebacterium glutamicum group and complete genome sequence of strain R.</title>
        <authorList>
            <person name="Yukawa H."/>
            <person name="Omumasaba C.A."/>
            <person name="Nonaka H."/>
            <person name="Kos P."/>
            <person name="Okai N."/>
            <person name="Suzuki N."/>
            <person name="Suda M."/>
            <person name="Tsuge Y."/>
            <person name="Watanabe J."/>
            <person name="Ikeda Y."/>
            <person name="Vertes A.A."/>
            <person name="Inui M."/>
        </authorList>
    </citation>
    <scope>NUCLEOTIDE SEQUENCE [LARGE SCALE GENOMIC DNA]</scope>
    <source>
        <strain>R</strain>
    </source>
</reference>
<organism>
    <name type="scientific">Corynebacterium glutamicum (strain R)</name>
    <dbReference type="NCBI Taxonomy" id="340322"/>
    <lineage>
        <taxon>Bacteria</taxon>
        <taxon>Bacillati</taxon>
        <taxon>Actinomycetota</taxon>
        <taxon>Actinomycetes</taxon>
        <taxon>Mycobacteriales</taxon>
        <taxon>Corynebacteriaceae</taxon>
        <taxon>Corynebacterium</taxon>
    </lineage>
</organism>
<proteinExistence type="inferred from homology"/>